<gene>
    <name evidence="1" type="primary">atpA</name>
</gene>
<evidence type="ECO:0000255" key="1">
    <source>
        <dbReference type="HAMAP-Rule" id="MF_01346"/>
    </source>
</evidence>
<protein>
    <recommendedName>
        <fullName evidence="1">ATP synthase subunit alpha, chloroplastic</fullName>
        <ecNumber evidence="1">7.1.2.2</ecNumber>
    </recommendedName>
    <alternativeName>
        <fullName evidence="1">ATP synthase F1 sector subunit alpha</fullName>
    </alternativeName>
    <alternativeName>
        <fullName evidence="1">F-ATPase subunit alpha</fullName>
    </alternativeName>
</protein>
<keyword id="KW-0066">ATP synthesis</keyword>
<keyword id="KW-0067">ATP-binding</keyword>
<keyword id="KW-0139">CF(1)</keyword>
<keyword id="KW-0150">Chloroplast</keyword>
<keyword id="KW-0375">Hydrogen ion transport</keyword>
<keyword id="KW-0406">Ion transport</keyword>
<keyword id="KW-0472">Membrane</keyword>
<keyword id="KW-0547">Nucleotide-binding</keyword>
<keyword id="KW-0934">Plastid</keyword>
<keyword id="KW-0793">Thylakoid</keyword>
<keyword id="KW-1278">Translocase</keyword>
<keyword id="KW-0813">Transport</keyword>
<name>ATPA_MANES</name>
<comment type="function">
    <text evidence="1">Produces ATP from ADP in the presence of a proton gradient across the membrane. The alpha chain is a regulatory subunit.</text>
</comment>
<comment type="catalytic activity">
    <reaction evidence="1">
        <text>ATP + H2O + 4 H(+)(in) = ADP + phosphate + 5 H(+)(out)</text>
        <dbReference type="Rhea" id="RHEA:57720"/>
        <dbReference type="ChEBI" id="CHEBI:15377"/>
        <dbReference type="ChEBI" id="CHEBI:15378"/>
        <dbReference type="ChEBI" id="CHEBI:30616"/>
        <dbReference type="ChEBI" id="CHEBI:43474"/>
        <dbReference type="ChEBI" id="CHEBI:456216"/>
        <dbReference type="EC" id="7.1.2.2"/>
    </reaction>
</comment>
<comment type="subunit">
    <text evidence="1">F-type ATPases have 2 components, CF(1) - the catalytic core - and CF(0) - the membrane proton channel. CF(1) has five subunits: alpha(3), beta(3), gamma(1), delta(1), epsilon(1). CF(0) has four main subunits: a, b, b' and c.</text>
</comment>
<comment type="subcellular location">
    <subcellularLocation>
        <location evidence="1">Plastid</location>
        <location evidence="1">Chloroplast thylakoid membrane</location>
        <topology evidence="1">Peripheral membrane protein</topology>
    </subcellularLocation>
</comment>
<comment type="similarity">
    <text evidence="1">Belongs to the ATPase alpha/beta chains family.</text>
</comment>
<dbReference type="EC" id="7.1.2.2" evidence="1"/>
<dbReference type="EMBL" id="EU117376">
    <property type="protein sequence ID" value="ABV66139.1"/>
    <property type="molecule type" value="Genomic_DNA"/>
</dbReference>
<dbReference type="RefSeq" id="YP_001718422.1">
    <property type="nucleotide sequence ID" value="NC_010433.1"/>
</dbReference>
<dbReference type="SMR" id="B1NWD5"/>
<dbReference type="GeneID" id="6000076"/>
<dbReference type="KEGG" id="mesc:6000076"/>
<dbReference type="OrthoDB" id="9805536at2759"/>
<dbReference type="GO" id="GO:0009535">
    <property type="term" value="C:chloroplast thylakoid membrane"/>
    <property type="evidence" value="ECO:0007669"/>
    <property type="project" value="UniProtKB-SubCell"/>
</dbReference>
<dbReference type="GO" id="GO:0045259">
    <property type="term" value="C:proton-transporting ATP synthase complex"/>
    <property type="evidence" value="ECO:0007669"/>
    <property type="project" value="UniProtKB-KW"/>
</dbReference>
<dbReference type="GO" id="GO:0005524">
    <property type="term" value="F:ATP binding"/>
    <property type="evidence" value="ECO:0007669"/>
    <property type="project" value="UniProtKB-UniRule"/>
</dbReference>
<dbReference type="GO" id="GO:0046933">
    <property type="term" value="F:proton-transporting ATP synthase activity, rotational mechanism"/>
    <property type="evidence" value="ECO:0007669"/>
    <property type="project" value="UniProtKB-UniRule"/>
</dbReference>
<dbReference type="CDD" id="cd18113">
    <property type="entry name" value="ATP-synt_F1_alpha_C"/>
    <property type="match status" value="1"/>
</dbReference>
<dbReference type="CDD" id="cd18116">
    <property type="entry name" value="ATP-synt_F1_alpha_N"/>
    <property type="match status" value="1"/>
</dbReference>
<dbReference type="CDD" id="cd01132">
    <property type="entry name" value="F1-ATPase_alpha_CD"/>
    <property type="match status" value="1"/>
</dbReference>
<dbReference type="FunFam" id="1.20.150.20:FF:000001">
    <property type="entry name" value="ATP synthase subunit alpha"/>
    <property type="match status" value="1"/>
</dbReference>
<dbReference type="FunFam" id="2.40.30.20:FF:000001">
    <property type="entry name" value="ATP synthase subunit alpha"/>
    <property type="match status" value="1"/>
</dbReference>
<dbReference type="FunFam" id="3.40.50.300:FF:000002">
    <property type="entry name" value="ATP synthase subunit alpha"/>
    <property type="match status" value="1"/>
</dbReference>
<dbReference type="Gene3D" id="2.40.30.20">
    <property type="match status" value="1"/>
</dbReference>
<dbReference type="Gene3D" id="1.20.150.20">
    <property type="entry name" value="ATP synthase alpha/beta chain, C-terminal domain"/>
    <property type="match status" value="1"/>
</dbReference>
<dbReference type="Gene3D" id="3.40.50.300">
    <property type="entry name" value="P-loop containing nucleotide triphosphate hydrolases"/>
    <property type="match status" value="1"/>
</dbReference>
<dbReference type="HAMAP" id="MF_01346">
    <property type="entry name" value="ATP_synth_alpha_bact"/>
    <property type="match status" value="1"/>
</dbReference>
<dbReference type="InterPro" id="IPR023366">
    <property type="entry name" value="ATP_synth_asu-like_sf"/>
</dbReference>
<dbReference type="InterPro" id="IPR000793">
    <property type="entry name" value="ATP_synth_asu_C"/>
</dbReference>
<dbReference type="InterPro" id="IPR038376">
    <property type="entry name" value="ATP_synth_asu_C_sf"/>
</dbReference>
<dbReference type="InterPro" id="IPR033732">
    <property type="entry name" value="ATP_synth_F1_a_nt-bd_dom"/>
</dbReference>
<dbReference type="InterPro" id="IPR005294">
    <property type="entry name" value="ATP_synth_F1_asu"/>
</dbReference>
<dbReference type="InterPro" id="IPR020003">
    <property type="entry name" value="ATPase_a/bsu_AS"/>
</dbReference>
<dbReference type="InterPro" id="IPR004100">
    <property type="entry name" value="ATPase_F1/V1/A1_a/bsu_N"/>
</dbReference>
<dbReference type="InterPro" id="IPR036121">
    <property type="entry name" value="ATPase_F1/V1/A1_a/bsu_N_sf"/>
</dbReference>
<dbReference type="InterPro" id="IPR000194">
    <property type="entry name" value="ATPase_F1/V1/A1_a/bsu_nucl-bd"/>
</dbReference>
<dbReference type="InterPro" id="IPR027417">
    <property type="entry name" value="P-loop_NTPase"/>
</dbReference>
<dbReference type="NCBIfam" id="TIGR00962">
    <property type="entry name" value="atpA"/>
    <property type="match status" value="1"/>
</dbReference>
<dbReference type="NCBIfam" id="NF009884">
    <property type="entry name" value="PRK13343.1"/>
    <property type="match status" value="1"/>
</dbReference>
<dbReference type="PANTHER" id="PTHR48082">
    <property type="entry name" value="ATP SYNTHASE SUBUNIT ALPHA, MITOCHONDRIAL"/>
    <property type="match status" value="1"/>
</dbReference>
<dbReference type="PANTHER" id="PTHR48082:SF2">
    <property type="entry name" value="ATP SYNTHASE SUBUNIT ALPHA, MITOCHONDRIAL"/>
    <property type="match status" value="1"/>
</dbReference>
<dbReference type="Pfam" id="PF00006">
    <property type="entry name" value="ATP-synt_ab"/>
    <property type="match status" value="1"/>
</dbReference>
<dbReference type="Pfam" id="PF00306">
    <property type="entry name" value="ATP-synt_ab_C"/>
    <property type="match status" value="1"/>
</dbReference>
<dbReference type="Pfam" id="PF02874">
    <property type="entry name" value="ATP-synt_ab_N"/>
    <property type="match status" value="1"/>
</dbReference>
<dbReference type="PIRSF" id="PIRSF039088">
    <property type="entry name" value="F_ATPase_subunit_alpha"/>
    <property type="match status" value="1"/>
</dbReference>
<dbReference type="SUPFAM" id="SSF47917">
    <property type="entry name" value="C-terminal domain of alpha and beta subunits of F1 ATP synthase"/>
    <property type="match status" value="1"/>
</dbReference>
<dbReference type="SUPFAM" id="SSF50615">
    <property type="entry name" value="N-terminal domain of alpha and beta subunits of F1 ATP synthase"/>
    <property type="match status" value="1"/>
</dbReference>
<dbReference type="SUPFAM" id="SSF52540">
    <property type="entry name" value="P-loop containing nucleoside triphosphate hydrolases"/>
    <property type="match status" value="1"/>
</dbReference>
<dbReference type="PROSITE" id="PS00152">
    <property type="entry name" value="ATPASE_ALPHA_BETA"/>
    <property type="match status" value="1"/>
</dbReference>
<accession>B1NWD5</accession>
<organism>
    <name type="scientific">Manihot esculenta</name>
    <name type="common">Cassava</name>
    <name type="synonym">Jatropha manihot</name>
    <dbReference type="NCBI Taxonomy" id="3983"/>
    <lineage>
        <taxon>Eukaryota</taxon>
        <taxon>Viridiplantae</taxon>
        <taxon>Streptophyta</taxon>
        <taxon>Embryophyta</taxon>
        <taxon>Tracheophyta</taxon>
        <taxon>Spermatophyta</taxon>
        <taxon>Magnoliopsida</taxon>
        <taxon>eudicotyledons</taxon>
        <taxon>Gunneridae</taxon>
        <taxon>Pentapetalae</taxon>
        <taxon>rosids</taxon>
        <taxon>fabids</taxon>
        <taxon>Malpighiales</taxon>
        <taxon>Euphorbiaceae</taxon>
        <taxon>Crotonoideae</taxon>
        <taxon>Manihoteae</taxon>
        <taxon>Manihot</taxon>
    </lineage>
</organism>
<feature type="chain" id="PRO_0000339096" description="ATP synthase subunit alpha, chloroplastic">
    <location>
        <begin position="1"/>
        <end position="507"/>
    </location>
</feature>
<feature type="binding site" evidence="1">
    <location>
        <begin position="170"/>
        <end position="177"/>
    </location>
    <ligand>
        <name>ATP</name>
        <dbReference type="ChEBI" id="CHEBI:30616"/>
    </ligand>
</feature>
<feature type="site" description="Required for activity" evidence="1">
    <location>
        <position position="363"/>
    </location>
</feature>
<geneLocation type="chloroplast"/>
<sequence length="507" mass="55599">MVTIRADEISNIIRERIEQYNREVKIVNTGTVLQVGDGIARIYGLDEVMAGELVEFEEGTIGIALNLESNNVGVVLMGDGLMIQEGSSVKATGRIAQIPVSEAYLGRVINALAKPIDGRGEISASESRLIESPAPGIISRRSVYEPLQTGLIAIDSMIPIGRGQRELIIGDRQTGKTAVATDTILNQQGQNVICVYVAIGQKASSVAQVVTTLQERGAMEYTIVVAETADSPATLQYLAPYTGAALAEYFMYRERHTLIIYDDLSKQAQAYRQMSLLLRRPPGREAYPGDVFYLHSRLLERAAKLSSRLGEGSMTALPIVETQSGDVSAYIPTNVISITDGQIFLSADLFNAGIRPAINVGISVSRVGSAAQIKAMKQVAGKLKLELAQFVELEAFAQFASDLDKATQNQLARGQRLRELLKQSQSAPLTVEEQIMTIYTGTNGYLDSLEIGQVRKFLVELRTYLKTNKPQFQEIISSTKTFTEEAETLLKEAIQEQKERFVIQEQV</sequence>
<proteinExistence type="inferred from homology"/>
<reference key="1">
    <citation type="journal article" date="2008" name="Theor. Appl. Genet.">
        <title>The complete nucleotide sequence of the cassava (Manihot esculenta) chloroplast genome and the evolution of atpF in Malpighiales: RNA editing and multiple losses of a group II intron.</title>
        <authorList>
            <person name="Daniell H."/>
            <person name="Wurdack K.J."/>
            <person name="Kanagaraj A."/>
            <person name="Lee S.-B."/>
            <person name="Saski C."/>
            <person name="Jansen R.K."/>
        </authorList>
    </citation>
    <scope>NUCLEOTIDE SEQUENCE [LARGE SCALE GENOMIC DNA]</scope>
    <source>
        <strain>cv. TME3</strain>
    </source>
</reference>